<comment type="function">
    <text evidence="1">GTPase-activating protein (GAP) for rhoa and cdc42.</text>
</comment>
<comment type="subcellular location">
    <subcellularLocation>
        <location evidence="1">Golgi apparatus membrane</location>
        <topology evidence="1">Peripheral membrane protein</topology>
    </subcellularLocation>
    <subcellularLocation>
        <location evidence="1">Cell junction</location>
    </subcellularLocation>
    <subcellularLocation>
        <location evidence="1">Cytoplasmic vesicle membrane</location>
        <topology evidence="1">Peripheral membrane protein</topology>
    </subcellularLocation>
    <subcellularLocation>
        <location evidence="1">Cytoplasm</location>
        <location evidence="1">Cytoskeleton</location>
    </subcellularLocation>
</comment>
<protein>
    <recommendedName>
        <fullName>Rho GTPase-activating protein 21-A</fullName>
    </recommendedName>
    <alternativeName>
        <fullName>Rho-type GTPase-activating protein 21-A</fullName>
    </alternativeName>
</protein>
<feature type="chain" id="PRO_0000305247" description="Rho GTPase-activating protein 21-A">
    <location>
        <begin position="1"/>
        <end position="1926"/>
    </location>
</feature>
<feature type="domain" description="PDZ" evidence="2">
    <location>
        <begin position="77"/>
        <end position="162"/>
    </location>
</feature>
<feature type="domain" description="PH" evidence="3">
    <location>
        <begin position="906"/>
        <end position="1019"/>
    </location>
</feature>
<feature type="domain" description="Rho-GAP" evidence="4">
    <location>
        <begin position="1126"/>
        <end position="1318"/>
    </location>
</feature>
<feature type="region of interest" description="Disordered" evidence="5">
    <location>
        <begin position="1"/>
        <end position="41"/>
    </location>
</feature>
<feature type="region of interest" description="Disordered" evidence="5">
    <location>
        <begin position="211"/>
        <end position="236"/>
    </location>
</feature>
<feature type="region of interest" description="Disordered" evidence="5">
    <location>
        <begin position="353"/>
        <end position="378"/>
    </location>
</feature>
<feature type="region of interest" description="Disordered" evidence="5">
    <location>
        <begin position="416"/>
        <end position="487"/>
    </location>
</feature>
<feature type="region of interest" description="Disordered" evidence="5">
    <location>
        <begin position="571"/>
        <end position="592"/>
    </location>
</feature>
<feature type="region of interest" description="Disordered" evidence="5">
    <location>
        <begin position="640"/>
        <end position="704"/>
    </location>
</feature>
<feature type="region of interest" description="Disordered" evidence="5">
    <location>
        <begin position="868"/>
        <end position="905"/>
    </location>
</feature>
<feature type="region of interest" description="Disordered" evidence="5">
    <location>
        <begin position="1044"/>
        <end position="1107"/>
    </location>
</feature>
<feature type="region of interest" description="Disordered" evidence="5">
    <location>
        <begin position="1330"/>
        <end position="1381"/>
    </location>
</feature>
<feature type="region of interest" description="Disordered" evidence="5">
    <location>
        <begin position="1396"/>
        <end position="1416"/>
    </location>
</feature>
<feature type="region of interest" description="Disordered" evidence="5">
    <location>
        <begin position="1512"/>
        <end position="1540"/>
    </location>
</feature>
<feature type="region of interest" description="Disordered" evidence="5">
    <location>
        <begin position="1573"/>
        <end position="1598"/>
    </location>
</feature>
<feature type="region of interest" description="Disordered" evidence="5">
    <location>
        <begin position="1626"/>
        <end position="1658"/>
    </location>
</feature>
<feature type="region of interest" description="Disordered" evidence="5">
    <location>
        <begin position="1827"/>
        <end position="1915"/>
    </location>
</feature>
<feature type="compositionally biased region" description="Polar residues" evidence="5">
    <location>
        <begin position="10"/>
        <end position="22"/>
    </location>
</feature>
<feature type="compositionally biased region" description="Polar residues" evidence="5">
    <location>
        <begin position="216"/>
        <end position="236"/>
    </location>
</feature>
<feature type="compositionally biased region" description="Polar residues" evidence="5">
    <location>
        <begin position="353"/>
        <end position="372"/>
    </location>
</feature>
<feature type="compositionally biased region" description="Polar residues" evidence="5">
    <location>
        <begin position="416"/>
        <end position="429"/>
    </location>
</feature>
<feature type="compositionally biased region" description="Low complexity" evidence="5">
    <location>
        <begin position="441"/>
        <end position="451"/>
    </location>
</feature>
<feature type="compositionally biased region" description="Basic and acidic residues" evidence="5">
    <location>
        <begin position="452"/>
        <end position="466"/>
    </location>
</feature>
<feature type="compositionally biased region" description="Polar residues" evidence="5">
    <location>
        <begin position="468"/>
        <end position="479"/>
    </location>
</feature>
<feature type="compositionally biased region" description="Polar residues" evidence="5">
    <location>
        <begin position="640"/>
        <end position="669"/>
    </location>
</feature>
<feature type="compositionally biased region" description="Polar residues" evidence="5">
    <location>
        <begin position="1044"/>
        <end position="1064"/>
    </location>
</feature>
<feature type="compositionally biased region" description="Basic and acidic residues" evidence="5">
    <location>
        <begin position="1083"/>
        <end position="1105"/>
    </location>
</feature>
<feature type="compositionally biased region" description="Polar residues" evidence="5">
    <location>
        <begin position="1512"/>
        <end position="1534"/>
    </location>
</feature>
<feature type="compositionally biased region" description="Polar residues" evidence="5">
    <location>
        <begin position="1639"/>
        <end position="1653"/>
    </location>
</feature>
<feature type="compositionally biased region" description="Polar residues" evidence="5">
    <location>
        <begin position="1866"/>
        <end position="1902"/>
    </location>
</feature>
<feature type="site" description="Arginine finger; crucial for GTP hydrolysis by stabilizing the transition state" evidence="4">
    <location>
        <position position="1163"/>
    </location>
</feature>
<reference key="1">
    <citation type="submission" date="2004-07" db="EMBL/GenBank/DDBJ databases">
        <authorList>
            <consortium name="NIH - Xenopus Gene Collection (XGC) project"/>
        </authorList>
    </citation>
    <scope>NUCLEOTIDE SEQUENCE [LARGE SCALE MRNA]</scope>
    <source>
        <tissue>Oocyte</tissue>
    </source>
</reference>
<dbReference type="EMBL" id="BC076778">
    <property type="protein sequence ID" value="AAH76778.1"/>
    <property type="molecule type" value="mRNA"/>
</dbReference>
<dbReference type="RefSeq" id="NP_001086541.1">
    <property type="nucleotide sequence ID" value="NM_001093072.1"/>
</dbReference>
<dbReference type="SMR" id="Q6DFG0"/>
<dbReference type="GeneID" id="446376"/>
<dbReference type="KEGG" id="xla:446376"/>
<dbReference type="AGR" id="Xenbase:XB-GENE-17340893"/>
<dbReference type="CTD" id="446376"/>
<dbReference type="Xenbase" id="XB-GENE-17340893">
    <property type="gene designation" value="arhgap21.S"/>
</dbReference>
<dbReference type="OrthoDB" id="6281275at2759"/>
<dbReference type="Proteomes" id="UP000186698">
    <property type="component" value="Chromosome 6S"/>
</dbReference>
<dbReference type="Bgee" id="446376">
    <property type="expression patterns" value="Expressed in blastula and 19 other cell types or tissues"/>
</dbReference>
<dbReference type="GO" id="GO:0070161">
    <property type="term" value="C:anchoring junction"/>
    <property type="evidence" value="ECO:0007669"/>
    <property type="project" value="UniProtKB-SubCell"/>
</dbReference>
<dbReference type="GO" id="GO:0030659">
    <property type="term" value="C:cytoplasmic vesicle membrane"/>
    <property type="evidence" value="ECO:0007669"/>
    <property type="project" value="UniProtKB-SubCell"/>
</dbReference>
<dbReference type="GO" id="GO:0005856">
    <property type="term" value="C:cytoskeleton"/>
    <property type="evidence" value="ECO:0007669"/>
    <property type="project" value="UniProtKB-SubCell"/>
</dbReference>
<dbReference type="GO" id="GO:0000139">
    <property type="term" value="C:Golgi membrane"/>
    <property type="evidence" value="ECO:0007669"/>
    <property type="project" value="UniProtKB-SubCell"/>
</dbReference>
<dbReference type="GO" id="GO:0005096">
    <property type="term" value="F:GTPase activator activity"/>
    <property type="evidence" value="ECO:0007669"/>
    <property type="project" value="UniProtKB-KW"/>
</dbReference>
<dbReference type="GO" id="GO:0051645">
    <property type="term" value="P:Golgi localization"/>
    <property type="evidence" value="ECO:0000318"/>
    <property type="project" value="GO_Central"/>
</dbReference>
<dbReference type="GO" id="GO:0007165">
    <property type="term" value="P:signal transduction"/>
    <property type="evidence" value="ECO:0007669"/>
    <property type="project" value="InterPro"/>
</dbReference>
<dbReference type="CDD" id="cd06756">
    <property type="entry name" value="PDZ_ARHGAP21_23-like"/>
    <property type="match status" value="1"/>
</dbReference>
<dbReference type="CDD" id="cd01253">
    <property type="entry name" value="PH_ARHGAP21-like"/>
    <property type="match status" value="1"/>
</dbReference>
<dbReference type="CDD" id="cd04395">
    <property type="entry name" value="RhoGAP_ARHGAP21"/>
    <property type="match status" value="1"/>
</dbReference>
<dbReference type="FunFam" id="1.10.555.10:FF:000014">
    <property type="entry name" value="Rho GTPase activating protein 21"/>
    <property type="match status" value="1"/>
</dbReference>
<dbReference type="FunFam" id="2.30.42.10:FF:000066">
    <property type="entry name" value="Rho GTPase activating protein 21"/>
    <property type="match status" value="1"/>
</dbReference>
<dbReference type="Gene3D" id="1.20.5.220">
    <property type="match status" value="1"/>
</dbReference>
<dbReference type="Gene3D" id="2.30.42.10">
    <property type="match status" value="1"/>
</dbReference>
<dbReference type="Gene3D" id="2.30.29.30">
    <property type="entry name" value="Pleckstrin-homology domain (PH domain)/Phosphotyrosine-binding domain (PTB)"/>
    <property type="match status" value="1"/>
</dbReference>
<dbReference type="Gene3D" id="1.10.555.10">
    <property type="entry name" value="Rho GTPase activation protein"/>
    <property type="match status" value="1"/>
</dbReference>
<dbReference type="InterPro" id="IPR001478">
    <property type="entry name" value="PDZ"/>
</dbReference>
<dbReference type="InterPro" id="IPR041489">
    <property type="entry name" value="PDZ_6"/>
</dbReference>
<dbReference type="InterPro" id="IPR036034">
    <property type="entry name" value="PDZ_sf"/>
</dbReference>
<dbReference type="InterPro" id="IPR011993">
    <property type="entry name" value="PH-like_dom_sf"/>
</dbReference>
<dbReference type="InterPro" id="IPR001849">
    <property type="entry name" value="PH_domain"/>
</dbReference>
<dbReference type="InterPro" id="IPR008936">
    <property type="entry name" value="Rho_GTPase_activation_prot"/>
</dbReference>
<dbReference type="InterPro" id="IPR000198">
    <property type="entry name" value="RhoGAP_dom"/>
</dbReference>
<dbReference type="PANTHER" id="PTHR23175">
    <property type="entry name" value="PDZ DOMAIN-CONTAINING PROTEIN"/>
    <property type="match status" value="1"/>
</dbReference>
<dbReference type="PANTHER" id="PTHR23175:SF16">
    <property type="entry name" value="RHO GTPASE-ACTIVATING PROTEIN 21"/>
    <property type="match status" value="1"/>
</dbReference>
<dbReference type="Pfam" id="PF17820">
    <property type="entry name" value="PDZ_6"/>
    <property type="match status" value="1"/>
</dbReference>
<dbReference type="Pfam" id="PF00169">
    <property type="entry name" value="PH"/>
    <property type="match status" value="1"/>
</dbReference>
<dbReference type="Pfam" id="PF00620">
    <property type="entry name" value="RhoGAP"/>
    <property type="match status" value="1"/>
</dbReference>
<dbReference type="SMART" id="SM00228">
    <property type="entry name" value="PDZ"/>
    <property type="match status" value="1"/>
</dbReference>
<dbReference type="SMART" id="SM00233">
    <property type="entry name" value="PH"/>
    <property type="match status" value="1"/>
</dbReference>
<dbReference type="SMART" id="SM00324">
    <property type="entry name" value="RhoGAP"/>
    <property type="match status" value="1"/>
</dbReference>
<dbReference type="SUPFAM" id="SSF48350">
    <property type="entry name" value="GTPase activation domain, GAP"/>
    <property type="match status" value="1"/>
</dbReference>
<dbReference type="SUPFAM" id="SSF50156">
    <property type="entry name" value="PDZ domain-like"/>
    <property type="match status" value="1"/>
</dbReference>
<dbReference type="SUPFAM" id="SSF50729">
    <property type="entry name" value="PH domain-like"/>
    <property type="match status" value="1"/>
</dbReference>
<dbReference type="PROSITE" id="PS50106">
    <property type="entry name" value="PDZ"/>
    <property type="match status" value="1"/>
</dbReference>
<dbReference type="PROSITE" id="PS50003">
    <property type="entry name" value="PH_DOMAIN"/>
    <property type="match status" value="1"/>
</dbReference>
<dbReference type="PROSITE" id="PS50238">
    <property type="entry name" value="RHOGAP"/>
    <property type="match status" value="1"/>
</dbReference>
<sequence length="1926" mass="214713">MATRRAIVPEQQQEPSSPASEISKNKDGQEQSEMVSPMEEEGFCWPGPKSVALRRTSDGFGFTLRHFIVYPPESAVHTSIKDEENGNRGVNTGRPRNKLEPMDTIFVKQVKEGGPAHEAGLCTGDRIIKVNGESVIGKTYSQVIALIQNSDSTLELSVMPKDEDILQLAYSQDAYLKGNDSYSGNAHHIPEPPPLCYPRIKPAASVMAQPVEVPPSGTSLAKQQSSRPVRTATTQPDRSYRVEIQVPPSPTELVKSNTAVCVCNEAVRTVLVPSEKVVDLSSNRTNRAGPLHRTEEVRYGLADPSILKRTTSPTSSIPHVQMVPTARQFDNAGVIGKPPSYGGHAENMFSTRPTAQAEGSPSPTNHYSSPGPHQQIDWRNYKTYKEYIDNRRMQMYGCRTIQERLDSLKAASQTTTDYNQMLPNHFSGQSRRRSTSHDRVQQSVQMRQRSVSQERLEDPVLMKEWPRSASQDTLSSAVASRNHRSESWDYHARKGDFDQFIVETQSNGERKHNYKWSGFTEQDDRRGITERPRQHSFHMSLRSPNFTMAPVPYTSFAHPLQKVHPDVKTIQPTRQNSYRSPHPRPAVSDRSGFAVSKSNSVKIPTPCASKSYSPSVRSDDGIVIDQKPVNYMHVSGPQNFQRKTQTESASGFQLDSVKTSMSASSSPPANTKPAKQVKHSTATSQNVDVKKTPSPEANAGDSDAVLTPVDQVVLREKPSPGQQTSPPIRQQSYIFAVNEQEGVSDTTCWLPNDARREVHIKRIEQRKASGSNSPGNSLASIPFIDEPTSPSIDHEIGNIPASAVISISEQPLPTITTVPPSPTSPVPLMRRHFSHDHDSIRPSILEVNSKTERSKSCDEGLDDYKEEGKLGLKQGSSLKGVQARENVPSSEDSESRKDSSSDVFSDSNKEGFLYFRQVTTEKGKRVSGSIRPWKQMYVVLRGSALYLQKDKKEQTGHSSAQSDEEQLIGINGCLIDISYSETKRKHVFRLTTSDREFLFQAEDRDDMLAWIKAIQENGNLNDEQTDQASRVLISKRIKEYNTMMSSASNKSEQSPKAPRQTLSIRQPFRATRPDGKLQSPHSPKQESERRLFSKDDISPPKDKGSWRRIMKNPFEKKPITGGTFGVRLDDCPPAHNNKYVPLIVDVCCKLVEERGLEATGIYRVPGNNAAISSMQEDLNKANTDIDIQDDKWRDLNVISSLLKSFFRKLPDPLFTNEKYNDFIEANRTEDPVERLKTLKRLILDLPDHHYETLKYLSAHLKTVADNAELNKMEPRNLAIVFGPTLVRTSEDNMTHMVTHMPDQYKIVETLIQKHDWFFSDESADEPITTVHEESTVESQPVPNIDHLLPNIGRTGLSPGDVSDSATSDSAKPKGSWGSGKDQYSRELLVSSLFAAASRKRKKPKDKPQPSSSEDELDNVFYQKELSQVEFQIPDKQNVDKDADLKAKANALSFKDADNIKGTNIITEDKLESDIMHSESTSPCLPKLLEPPKENHRLQVPSDDKTIPQISFQMEESMSDSGTMLSNSSQASAQRSKPKVVSPEFKGHDFLTADVSSITSDYSTTSSTIYMTGLDPNPISPEVQSVAESKGEEADDERSELISEGRPVETDSENDFHIFASSLAFNRQHRSKEEDPPRNVQANAEGSPSCTEGSITPRLDTRRFSSHKLIECDTLSRKKSVRLKTDSECSAESKNEETLSDAHEVMKKSRSPINVDTTANNEPEEPAWRIKITDRLKLRLKASADDMFGIGSQKAHAAETRKKKNIRRRHTLGGQRDFAEISVLNAWKINEPSSKEVELSAVDRLKPKCPSQDLSISDWLARERLRTSTSELSTVEPEEKHISETTGQKESVSPSPPPSSSPSQVSTADIPTGSESPSLGTAPQSDDQMNGDSFQSKNKNNFSPAVDAHPHKLSGTQVVRSRFYQYL</sequence>
<gene>
    <name type="primary">arhgap21-a</name>
</gene>
<keyword id="KW-0965">Cell junction</keyword>
<keyword id="KW-0963">Cytoplasm</keyword>
<keyword id="KW-0968">Cytoplasmic vesicle</keyword>
<keyword id="KW-0206">Cytoskeleton</keyword>
<keyword id="KW-0333">Golgi apparatus</keyword>
<keyword id="KW-0343">GTPase activation</keyword>
<keyword id="KW-0472">Membrane</keyword>
<keyword id="KW-1185">Reference proteome</keyword>
<organism>
    <name type="scientific">Xenopus laevis</name>
    <name type="common">African clawed frog</name>
    <dbReference type="NCBI Taxonomy" id="8355"/>
    <lineage>
        <taxon>Eukaryota</taxon>
        <taxon>Metazoa</taxon>
        <taxon>Chordata</taxon>
        <taxon>Craniata</taxon>
        <taxon>Vertebrata</taxon>
        <taxon>Euteleostomi</taxon>
        <taxon>Amphibia</taxon>
        <taxon>Batrachia</taxon>
        <taxon>Anura</taxon>
        <taxon>Pipoidea</taxon>
        <taxon>Pipidae</taxon>
        <taxon>Xenopodinae</taxon>
        <taxon>Xenopus</taxon>
        <taxon>Xenopus</taxon>
    </lineage>
</organism>
<name>RH21A_XENLA</name>
<accession>Q6DFG0</accession>
<evidence type="ECO:0000250" key="1"/>
<evidence type="ECO:0000255" key="2">
    <source>
        <dbReference type="PROSITE-ProRule" id="PRU00143"/>
    </source>
</evidence>
<evidence type="ECO:0000255" key="3">
    <source>
        <dbReference type="PROSITE-ProRule" id="PRU00145"/>
    </source>
</evidence>
<evidence type="ECO:0000255" key="4">
    <source>
        <dbReference type="PROSITE-ProRule" id="PRU00172"/>
    </source>
</evidence>
<evidence type="ECO:0000256" key="5">
    <source>
        <dbReference type="SAM" id="MobiDB-lite"/>
    </source>
</evidence>
<proteinExistence type="evidence at transcript level"/>